<keyword id="KW-0001">2Fe-2S</keyword>
<keyword id="KW-0249">Electron transport</keyword>
<keyword id="KW-0274">FAD</keyword>
<keyword id="KW-0285">Flavoprotein</keyword>
<keyword id="KW-0408">Iron</keyword>
<keyword id="KW-0411">Iron-sulfur</keyword>
<keyword id="KW-0479">Metal-binding</keyword>
<keyword id="KW-0665">Pyrimidine biosynthesis</keyword>
<keyword id="KW-0813">Transport</keyword>
<name>PYRK_BACCL</name>
<organism>
    <name type="scientific">Bacillus caldolyticus</name>
    <dbReference type="NCBI Taxonomy" id="1394"/>
    <lineage>
        <taxon>Bacteria</taxon>
        <taxon>Bacillati</taxon>
        <taxon>Bacillota</taxon>
        <taxon>Bacilli</taxon>
        <taxon>Bacillales</taxon>
        <taxon>Anoxybacillaceae</taxon>
        <taxon>Geobacillus</taxon>
        <taxon>Geobacillus thermoleovorans group</taxon>
    </lineage>
</organism>
<protein>
    <recommendedName>
        <fullName evidence="1">Dihydroorotate dehydrogenase B (NAD(+)), electron transfer subunit</fullName>
    </recommendedName>
    <alternativeName>
        <fullName evidence="1">Dihydroorotate oxidase B, electron transfer subunit</fullName>
    </alternativeName>
</protein>
<dbReference type="EMBL" id="X73308">
    <property type="protein sequence ID" value="CAA51740.1"/>
    <property type="molecule type" value="Genomic_DNA"/>
</dbReference>
<dbReference type="PIR" id="I40170">
    <property type="entry name" value="I40170"/>
</dbReference>
<dbReference type="SMR" id="P46536"/>
<dbReference type="UniPathway" id="UPA00070">
    <property type="reaction ID" value="UER00945"/>
</dbReference>
<dbReference type="GO" id="GO:0051537">
    <property type="term" value="F:2 iron, 2 sulfur cluster binding"/>
    <property type="evidence" value="ECO:0007669"/>
    <property type="project" value="UniProtKB-KW"/>
</dbReference>
<dbReference type="GO" id="GO:0009055">
    <property type="term" value="F:electron transfer activity"/>
    <property type="evidence" value="ECO:0007669"/>
    <property type="project" value="UniProtKB-UniRule"/>
</dbReference>
<dbReference type="GO" id="GO:0050660">
    <property type="term" value="F:flavin adenine dinucleotide binding"/>
    <property type="evidence" value="ECO:0007669"/>
    <property type="project" value="InterPro"/>
</dbReference>
<dbReference type="GO" id="GO:0046872">
    <property type="term" value="F:metal ion binding"/>
    <property type="evidence" value="ECO:0007669"/>
    <property type="project" value="UniProtKB-KW"/>
</dbReference>
<dbReference type="GO" id="GO:0016491">
    <property type="term" value="F:oxidoreductase activity"/>
    <property type="evidence" value="ECO:0007669"/>
    <property type="project" value="InterPro"/>
</dbReference>
<dbReference type="GO" id="GO:0044205">
    <property type="term" value="P:'de novo' UMP biosynthetic process"/>
    <property type="evidence" value="ECO:0007669"/>
    <property type="project" value="UniProtKB-UniRule"/>
</dbReference>
<dbReference type="CDD" id="cd06218">
    <property type="entry name" value="DHOD_e_trans"/>
    <property type="match status" value="1"/>
</dbReference>
<dbReference type="FunFam" id="2.10.240.10:FF:000001">
    <property type="entry name" value="Dihydroorotate dehydrogenase B (NAD(+)), electron transfer subunit"/>
    <property type="match status" value="1"/>
</dbReference>
<dbReference type="FunFam" id="3.40.50.80:FF:000017">
    <property type="entry name" value="Dihydroorotate dehydrogenase B (NAD(+)), electron transfer subunit"/>
    <property type="match status" value="1"/>
</dbReference>
<dbReference type="Gene3D" id="2.10.240.10">
    <property type="entry name" value="Dihydroorotate dehydrogenase, electron transfer subunit"/>
    <property type="match status" value="1"/>
</dbReference>
<dbReference type="Gene3D" id="3.40.50.80">
    <property type="entry name" value="Nucleotide-binding domain of ferredoxin-NADP reductase (FNR) module"/>
    <property type="match status" value="1"/>
</dbReference>
<dbReference type="Gene3D" id="2.40.30.10">
    <property type="entry name" value="Translation factors"/>
    <property type="match status" value="1"/>
</dbReference>
<dbReference type="HAMAP" id="MF_01211">
    <property type="entry name" value="DHODB_Fe_S_bind"/>
    <property type="match status" value="1"/>
</dbReference>
<dbReference type="InterPro" id="IPR008333">
    <property type="entry name" value="Cbr1-like_FAD-bd_dom"/>
</dbReference>
<dbReference type="InterPro" id="IPR012165">
    <property type="entry name" value="Cyt_c3_hydrogenase_gsu"/>
</dbReference>
<dbReference type="InterPro" id="IPR037117">
    <property type="entry name" value="Dihydroorotate_DH_ele_sf"/>
</dbReference>
<dbReference type="InterPro" id="IPR019480">
    <property type="entry name" value="Dihydroorotate_DH_Fe-S-bd"/>
</dbReference>
<dbReference type="InterPro" id="IPR023455">
    <property type="entry name" value="Dihydroorotate_DHASE_ETsu"/>
</dbReference>
<dbReference type="InterPro" id="IPR017927">
    <property type="entry name" value="FAD-bd_FR_type"/>
</dbReference>
<dbReference type="InterPro" id="IPR039261">
    <property type="entry name" value="FNR_nucleotide-bd"/>
</dbReference>
<dbReference type="InterPro" id="IPR001433">
    <property type="entry name" value="OxRdtase_FAD/NAD-bd"/>
</dbReference>
<dbReference type="InterPro" id="IPR050353">
    <property type="entry name" value="PyrK_electron_transfer"/>
</dbReference>
<dbReference type="InterPro" id="IPR017938">
    <property type="entry name" value="Riboflavin_synthase-like_b-brl"/>
</dbReference>
<dbReference type="NCBIfam" id="NF000797">
    <property type="entry name" value="PRK00054.1-2"/>
    <property type="match status" value="1"/>
</dbReference>
<dbReference type="NCBIfam" id="NF000799">
    <property type="entry name" value="PRK00054.1-4"/>
    <property type="match status" value="1"/>
</dbReference>
<dbReference type="PANTHER" id="PTHR43513">
    <property type="entry name" value="DIHYDROOROTATE DEHYDROGENASE B (NAD(+)), ELECTRON TRANSFER SUBUNIT"/>
    <property type="match status" value="1"/>
</dbReference>
<dbReference type="PANTHER" id="PTHR43513:SF3">
    <property type="entry name" value="DIHYDROOROTATE DEHYDROGENASE B (NAD(+)), ELECTRON TRANSFER SUBUNIT-RELATED"/>
    <property type="match status" value="1"/>
</dbReference>
<dbReference type="Pfam" id="PF10418">
    <property type="entry name" value="DHODB_Fe-S_bind"/>
    <property type="match status" value="1"/>
</dbReference>
<dbReference type="Pfam" id="PF00970">
    <property type="entry name" value="FAD_binding_6"/>
    <property type="match status" value="1"/>
</dbReference>
<dbReference type="Pfam" id="PF00175">
    <property type="entry name" value="NAD_binding_1"/>
    <property type="match status" value="1"/>
</dbReference>
<dbReference type="PIRSF" id="PIRSF006816">
    <property type="entry name" value="Cyc3_hyd_g"/>
    <property type="match status" value="1"/>
</dbReference>
<dbReference type="SUPFAM" id="SSF52343">
    <property type="entry name" value="Ferredoxin reductase-like, C-terminal NADP-linked domain"/>
    <property type="match status" value="1"/>
</dbReference>
<dbReference type="SUPFAM" id="SSF63380">
    <property type="entry name" value="Riboflavin synthase domain-like"/>
    <property type="match status" value="1"/>
</dbReference>
<dbReference type="PROSITE" id="PS51384">
    <property type="entry name" value="FAD_FR"/>
    <property type="match status" value="1"/>
</dbReference>
<evidence type="ECO:0000255" key="1">
    <source>
        <dbReference type="HAMAP-Rule" id="MF_01211"/>
    </source>
</evidence>
<sequence>MIGRERMTVASQRLIAERTYELTLSGRLVQEMRQPGQFVHVKVAASADPLLRRPLSLCHIDHKQGQCTIIYRQEGKGTALLAQKQPGDTVDVLGPLGNGFPLEAAPAGSRALLVGGGIGVPPLYELAKQLTKRGVKVVSVLGFQTKAAVFYEEEFAAFGETHVATDDGSHGTAGRVTDVIEARSLEFDVLYACGPKPMLRALAERFPNRPVYLSLEERMGCGVGACFACVCHVPGSETAYKKVCSDGPVFRAGEVVL</sequence>
<reference key="1">
    <citation type="journal article" date="1994" name="Microbiology">
        <title>Molecular characterization of pyrimidine biosynthesis genes from the thermophile Bacillus caldolyticus.</title>
        <authorList>
            <person name="Ghim S.Y."/>
            <person name="Nielsen P."/>
            <person name="Neuhard J."/>
        </authorList>
    </citation>
    <scope>NUCLEOTIDE SEQUENCE [GENOMIC DNA]</scope>
    <source>
        <strain>DSM 405 / NBRC 15313 / YP-T</strain>
    </source>
</reference>
<comment type="function">
    <text evidence="1">Responsible for channeling the electrons from the oxidation of dihydroorotate from the FMN redox center in the PyrD type B subunit to the ultimate electron acceptor NAD(+).</text>
</comment>
<comment type="cofactor">
    <cofactor evidence="1">
        <name>[2Fe-2S] cluster</name>
        <dbReference type="ChEBI" id="CHEBI:190135"/>
    </cofactor>
    <text evidence="1">Binds 1 [2Fe-2S] cluster per subunit.</text>
</comment>
<comment type="cofactor">
    <cofactor evidence="1">
        <name>FAD</name>
        <dbReference type="ChEBI" id="CHEBI:57692"/>
    </cofactor>
    <text evidence="1">Binds 1 FAD per subunit.</text>
</comment>
<comment type="pathway">
    <text evidence="1">Pyrimidine metabolism; UMP biosynthesis via de novo pathway; orotate from (S)-dihydroorotate (NAD(+) route): step 1/1.</text>
</comment>
<comment type="subunit">
    <text evidence="1">Heterotetramer of 2 PyrK and 2 PyrD type B subunits.</text>
</comment>
<comment type="similarity">
    <text evidence="1">Belongs to the PyrK family.</text>
</comment>
<accession>P46536</accession>
<feature type="chain" id="PRO_0000148355" description="Dihydroorotate dehydrogenase B (NAD(+)), electron transfer subunit">
    <location>
        <begin position="1"/>
        <end position="257"/>
    </location>
</feature>
<feature type="domain" description="FAD-binding FR-type" evidence="1">
    <location>
        <begin position="2"/>
        <end position="102"/>
    </location>
</feature>
<feature type="binding site" evidence="1">
    <location>
        <begin position="53"/>
        <end position="56"/>
    </location>
    <ligand>
        <name>FAD</name>
        <dbReference type="ChEBI" id="CHEBI:57692"/>
    </ligand>
</feature>
<feature type="binding site" evidence="1">
    <location>
        <begin position="70"/>
        <end position="72"/>
    </location>
    <ligand>
        <name>FAD</name>
        <dbReference type="ChEBI" id="CHEBI:57692"/>
    </ligand>
</feature>
<feature type="binding site" evidence="1">
    <location>
        <begin position="77"/>
        <end position="78"/>
    </location>
    <ligand>
        <name>FAD</name>
        <dbReference type="ChEBI" id="CHEBI:57692"/>
    </ligand>
</feature>
<feature type="binding site" evidence="1">
    <location>
        <position position="221"/>
    </location>
    <ligand>
        <name>[2Fe-2S] cluster</name>
        <dbReference type="ChEBI" id="CHEBI:190135"/>
    </ligand>
</feature>
<feature type="binding site" evidence="1">
    <location>
        <position position="226"/>
    </location>
    <ligand>
        <name>[2Fe-2S] cluster</name>
        <dbReference type="ChEBI" id="CHEBI:190135"/>
    </ligand>
</feature>
<feature type="binding site" evidence="1">
    <location>
        <position position="229"/>
    </location>
    <ligand>
        <name>[2Fe-2S] cluster</name>
        <dbReference type="ChEBI" id="CHEBI:190135"/>
    </ligand>
</feature>
<feature type="binding site" evidence="1">
    <location>
        <position position="244"/>
    </location>
    <ligand>
        <name>[2Fe-2S] cluster</name>
        <dbReference type="ChEBI" id="CHEBI:190135"/>
    </ligand>
</feature>
<proteinExistence type="inferred from homology"/>
<gene>
    <name evidence="1" type="primary">pyrK</name>
</gene>